<gene>
    <name evidence="1" type="primary">rrp42</name>
    <name type="ordered locus">Ta1294</name>
</gene>
<dbReference type="EMBL" id="AL445067">
    <property type="protein sequence ID" value="CAC12416.1"/>
    <property type="status" value="ALT_INIT"/>
    <property type="molecule type" value="Genomic_DNA"/>
</dbReference>
<dbReference type="RefSeq" id="WP_010901699.1">
    <property type="nucleotide sequence ID" value="NC_002578.1"/>
</dbReference>
<dbReference type="PDB" id="8XFX">
    <property type="method" value="X-ray"/>
    <property type="resolution" value="2.30 A"/>
    <property type="chains" value="A/B=1-260"/>
</dbReference>
<dbReference type="PDB" id="8XIE">
    <property type="method" value="X-ray"/>
    <property type="resolution" value="3.50 A"/>
    <property type="chains" value="B/E/F=1-260"/>
</dbReference>
<dbReference type="PDBsum" id="8XFX"/>
<dbReference type="PDBsum" id="8XIE"/>
<dbReference type="SMR" id="Q9HIP1"/>
<dbReference type="FunCoup" id="Q9HIP1">
    <property type="interactions" value="148"/>
</dbReference>
<dbReference type="STRING" id="273075.gene:9572517"/>
<dbReference type="PaxDb" id="273075-Ta1294m"/>
<dbReference type="EnsemblBacteria" id="CAC12416">
    <property type="protein sequence ID" value="CAC12416"/>
    <property type="gene ID" value="CAC12416"/>
</dbReference>
<dbReference type="KEGG" id="tac:Ta1294"/>
<dbReference type="eggNOG" id="arCOG01574">
    <property type="taxonomic scope" value="Archaea"/>
</dbReference>
<dbReference type="HOGENOM" id="CLU_038194_0_0_2"/>
<dbReference type="InParanoid" id="Q9HIP1"/>
<dbReference type="OrthoDB" id="30932at2157"/>
<dbReference type="Proteomes" id="UP000001024">
    <property type="component" value="Chromosome"/>
</dbReference>
<dbReference type="GO" id="GO:0000177">
    <property type="term" value="C:cytoplasmic exosome (RNase complex)"/>
    <property type="evidence" value="ECO:0007669"/>
    <property type="project" value="TreeGrafter"/>
</dbReference>
<dbReference type="GO" id="GO:0035925">
    <property type="term" value="F:mRNA 3'-UTR AU-rich region binding"/>
    <property type="evidence" value="ECO:0007669"/>
    <property type="project" value="TreeGrafter"/>
</dbReference>
<dbReference type="GO" id="GO:0016075">
    <property type="term" value="P:rRNA catabolic process"/>
    <property type="evidence" value="ECO:0007669"/>
    <property type="project" value="TreeGrafter"/>
</dbReference>
<dbReference type="CDD" id="cd11365">
    <property type="entry name" value="RNase_PH_archRRP42"/>
    <property type="match status" value="1"/>
</dbReference>
<dbReference type="FunFam" id="3.30.230.70:FF:000017">
    <property type="entry name" value="Exosome complex component Rrp42"/>
    <property type="match status" value="1"/>
</dbReference>
<dbReference type="Gene3D" id="3.30.230.70">
    <property type="entry name" value="GHMP Kinase, N-terminal domain"/>
    <property type="match status" value="1"/>
</dbReference>
<dbReference type="HAMAP" id="MF_00622">
    <property type="entry name" value="Exosome_Rrp42"/>
    <property type="match status" value="1"/>
</dbReference>
<dbReference type="InterPro" id="IPR001247">
    <property type="entry name" value="ExoRNase_PH_dom1"/>
</dbReference>
<dbReference type="InterPro" id="IPR015847">
    <property type="entry name" value="ExoRNase_PH_dom2"/>
</dbReference>
<dbReference type="InterPro" id="IPR036345">
    <property type="entry name" value="ExoRNase_PH_dom2_sf"/>
</dbReference>
<dbReference type="InterPro" id="IPR050590">
    <property type="entry name" value="Exosome_comp_Rrp42_subfam"/>
</dbReference>
<dbReference type="InterPro" id="IPR027408">
    <property type="entry name" value="PNPase/RNase_PH_dom_sf"/>
</dbReference>
<dbReference type="InterPro" id="IPR020568">
    <property type="entry name" value="Ribosomal_Su5_D2-typ_SF"/>
</dbReference>
<dbReference type="InterPro" id="IPR020869">
    <property type="entry name" value="Rrp42_archaea"/>
</dbReference>
<dbReference type="NCBIfam" id="NF003282">
    <property type="entry name" value="PRK04282.1-1"/>
    <property type="match status" value="1"/>
</dbReference>
<dbReference type="PANTHER" id="PTHR11097:SF8">
    <property type="entry name" value="EXOSOME COMPLEX COMPONENT RRP42"/>
    <property type="match status" value="1"/>
</dbReference>
<dbReference type="PANTHER" id="PTHR11097">
    <property type="entry name" value="EXOSOME COMPLEX EXONUCLEASE RIBOSOMAL RNA PROCESSING PROTEIN"/>
    <property type="match status" value="1"/>
</dbReference>
<dbReference type="Pfam" id="PF01138">
    <property type="entry name" value="RNase_PH"/>
    <property type="match status" value="1"/>
</dbReference>
<dbReference type="Pfam" id="PF03725">
    <property type="entry name" value="RNase_PH_C"/>
    <property type="match status" value="1"/>
</dbReference>
<dbReference type="SUPFAM" id="SSF55666">
    <property type="entry name" value="Ribonuclease PH domain 2-like"/>
    <property type="match status" value="1"/>
</dbReference>
<dbReference type="SUPFAM" id="SSF54211">
    <property type="entry name" value="Ribosomal protein S5 domain 2-like"/>
    <property type="match status" value="1"/>
</dbReference>
<organism>
    <name type="scientific">Thermoplasma acidophilum (strain ATCC 25905 / DSM 1728 / JCM 9062 / NBRC 15155 / AMRC-C165)</name>
    <dbReference type="NCBI Taxonomy" id="273075"/>
    <lineage>
        <taxon>Archaea</taxon>
        <taxon>Methanobacteriati</taxon>
        <taxon>Thermoplasmatota</taxon>
        <taxon>Thermoplasmata</taxon>
        <taxon>Thermoplasmatales</taxon>
        <taxon>Thermoplasmataceae</taxon>
        <taxon>Thermoplasma</taxon>
    </lineage>
</organism>
<evidence type="ECO:0000255" key="1">
    <source>
        <dbReference type="HAMAP-Rule" id="MF_00622"/>
    </source>
</evidence>
<evidence type="ECO:0000305" key="2"/>
<evidence type="ECO:0007829" key="3">
    <source>
        <dbReference type="PDB" id="8XFX"/>
    </source>
</evidence>
<sequence length="260" mass="28362">MVKESAEILSEIRKNYILSTMKGGKRIDGRLPDEFRELTIIENYIPRANGSAYVALGNTRVVAGVKIEAGEPFPDTPDQGVLTTNVELLPIAFPSFEAGPPNDLAIEVSRVVDRGIRESKMISPEKLVIEQGKKVWIVFLDINVLDYDGNLIDASTIAAVAALRNAVVPASKEGGEDFKLPVSSTPISVTMVKIGDTLVCDPSLEEDQICGGRITVTTTEDGHIRAMQKGEIGAFTVEDVKKAVKMSLEVGKKLREKYFR</sequence>
<feature type="chain" id="PRO_0000140008" description="Exosome complex component Rrp42">
    <location>
        <begin position="1"/>
        <end position="260"/>
    </location>
</feature>
<feature type="strand" evidence="3">
    <location>
        <begin position="27"/>
        <end position="29"/>
    </location>
</feature>
<feature type="strand" evidence="3">
    <location>
        <begin position="38"/>
        <end position="42"/>
    </location>
</feature>
<feature type="strand" evidence="3">
    <location>
        <begin position="48"/>
        <end position="56"/>
    </location>
</feature>
<feature type="strand" evidence="3">
    <location>
        <begin position="59"/>
        <end position="70"/>
    </location>
</feature>
<feature type="strand" evidence="3">
    <location>
        <begin position="81"/>
        <end position="88"/>
    </location>
</feature>
<feature type="helix" evidence="3">
    <location>
        <begin position="102"/>
        <end position="118"/>
    </location>
</feature>
<feature type="turn" evidence="3">
    <location>
        <begin position="124"/>
        <end position="127"/>
    </location>
</feature>
<feature type="strand" evidence="3">
    <location>
        <begin position="128"/>
        <end position="130"/>
    </location>
</feature>
<feature type="turn" evidence="3">
    <location>
        <begin position="131"/>
        <end position="133"/>
    </location>
</feature>
<feature type="strand" evidence="3">
    <location>
        <begin position="134"/>
        <end position="146"/>
    </location>
</feature>
<feature type="helix" evidence="3">
    <location>
        <begin position="151"/>
        <end position="164"/>
    </location>
</feature>
<feature type="helix" evidence="3">
    <location>
        <begin position="170"/>
        <end position="172"/>
    </location>
</feature>
<feature type="strand" evidence="3">
    <location>
        <begin position="173"/>
        <end position="175"/>
    </location>
</feature>
<feature type="strand" evidence="3">
    <location>
        <begin position="187"/>
        <end position="194"/>
    </location>
</feature>
<feature type="strand" evidence="3">
    <location>
        <begin position="197"/>
        <end position="201"/>
    </location>
</feature>
<feature type="helix" evidence="3">
    <location>
        <begin position="204"/>
        <end position="209"/>
    </location>
</feature>
<feature type="strand" evidence="3">
    <location>
        <begin position="213"/>
        <end position="218"/>
    </location>
</feature>
<feature type="strand" evidence="3">
    <location>
        <begin position="224"/>
        <end position="232"/>
    </location>
</feature>
<feature type="helix" evidence="3">
    <location>
        <begin position="237"/>
        <end position="257"/>
    </location>
</feature>
<protein>
    <recommendedName>
        <fullName evidence="1">Exosome complex component Rrp42</fullName>
    </recommendedName>
</protein>
<reference key="1">
    <citation type="journal article" date="2000" name="Nature">
        <title>The genome sequence of the thermoacidophilic scavenger Thermoplasma acidophilum.</title>
        <authorList>
            <person name="Ruepp A."/>
            <person name="Graml W."/>
            <person name="Santos-Martinez M.-L."/>
            <person name="Koretke K.K."/>
            <person name="Volker C."/>
            <person name="Mewes H.-W."/>
            <person name="Frishman D."/>
            <person name="Stocker S."/>
            <person name="Lupas A.N."/>
            <person name="Baumeister W."/>
        </authorList>
    </citation>
    <scope>NUCLEOTIDE SEQUENCE [LARGE SCALE GENOMIC DNA]</scope>
    <source>
        <strain>ATCC 25905 / DSM 1728 / JCM 9062 / NBRC 15155 / AMRC-C165</strain>
    </source>
</reference>
<comment type="function">
    <text evidence="1">Non-catalytic component of the exosome, which is a complex involved in RNA degradation. Contributes to the structuring of the Rrp41 active site.</text>
</comment>
<comment type="subunit">
    <text evidence="1">Component of the archaeal exosome complex. Forms a hexameric ring-like arrangement composed of 3 Rrp41-Rrp42 heterodimers. The hexameric ring associates with a trimer of Rrp4 and/or Csl4 subunits.</text>
</comment>
<comment type="subcellular location">
    <subcellularLocation>
        <location evidence="1">Cytoplasm</location>
    </subcellularLocation>
</comment>
<comment type="similarity">
    <text evidence="1">Belongs to the RNase PH family. Rrp42 subfamily.</text>
</comment>
<comment type="sequence caution" evidence="2">
    <conflict type="erroneous initiation">
        <sequence resource="EMBL-CDS" id="CAC12416"/>
    </conflict>
    <text>Truncated N-terminus.</text>
</comment>
<proteinExistence type="evidence at protein level"/>
<name>RRP42_THEAC</name>
<keyword id="KW-0002">3D-structure</keyword>
<keyword id="KW-0963">Cytoplasm</keyword>
<keyword id="KW-0271">Exosome</keyword>
<keyword id="KW-1185">Reference proteome</keyword>
<accession>Q9HIP1</accession>